<protein>
    <recommendedName>
        <fullName evidence="5">Plasticin-C2</fullName>
    </recommendedName>
    <alternativeName>
        <fullName evidence="4">DRP-AC2</fullName>
    </alternativeName>
</protein>
<name>PTC2_AGACL</name>
<organism>
    <name type="scientific">Agalychnis callidryas</name>
    <name type="common">Red-eyed tree frog</name>
    <name type="synonym">Phyllomedusa callidryas</name>
    <dbReference type="NCBI Taxonomy" id="197464"/>
    <lineage>
        <taxon>Eukaryota</taxon>
        <taxon>Metazoa</taxon>
        <taxon>Chordata</taxon>
        <taxon>Craniata</taxon>
        <taxon>Vertebrata</taxon>
        <taxon>Euteleostomi</taxon>
        <taxon>Amphibia</taxon>
        <taxon>Batrachia</taxon>
        <taxon>Anura</taxon>
        <taxon>Neobatrachia</taxon>
        <taxon>Hyloidea</taxon>
        <taxon>Hylidae</taxon>
        <taxon>Phyllomedusinae</taxon>
        <taxon>Agalychnis</taxon>
    </lineage>
</organism>
<proteinExistence type="inferred from homology"/>
<keyword id="KW-0027">Amidation</keyword>
<keyword id="KW-0878">Amphibian defense peptide</keyword>
<keyword id="KW-0165">Cleavage on pair of basic residues</keyword>
<keyword id="KW-0204">Cytolysis</keyword>
<keyword id="KW-0354">Hemolysis</keyword>
<keyword id="KW-0472">Membrane</keyword>
<keyword id="KW-0964">Secreted</keyword>
<keyword id="KW-0732">Signal</keyword>
<keyword id="KW-1052">Target cell membrane</keyword>
<keyword id="KW-1053">Target membrane</keyword>
<reference key="1">
    <citation type="journal article" date="2003" name="Eur. J. Biochem.">
        <title>Antimicrobial peptides from hylid and ranin frogs originated from a 150-million-year-old ancestral precursor with a conserved signal peptide but a hypermutable antimicrobial domain.</title>
        <authorList>
            <person name="Vanhoye D."/>
            <person name="Bruston F."/>
            <person name="Nicolas P."/>
            <person name="Amiche M."/>
        </authorList>
    </citation>
    <scope>NUCLEOTIDE SEQUENCE [MRNA]</scope>
    <source>
        <tissue>Skin</tissue>
    </source>
</reference>
<reference key="2">
    <citation type="journal article" date="2008" name="Peptides">
        <title>A consistent nomenclature of antimicrobial peptides isolated from frogs of the subfamily Phyllomedusinae.</title>
        <authorList>
            <person name="Amiche M."/>
            <person name="Ladram A."/>
            <person name="Nicolas P."/>
        </authorList>
    </citation>
    <scope>NOMENCLATURE</scope>
</reference>
<comment type="function">
    <text evidence="1">Neutral peptide with no antimicrobial activity. May act in synergy with cationic peptides by enhancing their activity. Has a moderate hemolytic activity.</text>
</comment>
<comment type="subcellular location">
    <subcellularLocation>
        <location evidence="7">Secreted</location>
    </subcellularLocation>
    <subcellularLocation>
        <location evidence="7">Target cell membrane</location>
    </subcellularLocation>
</comment>
<comment type="tissue specificity">
    <text evidence="7">Expressed by the skin glands.</text>
</comment>
<comment type="domain">
    <text evidence="6">Plasticins have huge conformational plasticity. They can display random coil, alpha-helical, beta-sheet or beta-harpin structures.</text>
</comment>
<comment type="similarity">
    <text evidence="6">Belongs to the frog skin active peptide (FSAP) family. Plasticin subfamily.</text>
</comment>
<comment type="online information" name="The antimicrobial peptide database">
    <link uri="https://wangapd3.com/database/query_output.php?ID=01388"/>
</comment>
<sequence>MAFLKKSLLLVLFLALVPLSICEEEKREEEDEEKQEDDDQSENKRGLLSGILNSAGGLLGNLIGSLSNGES</sequence>
<accession>Q800S1</accession>
<dbReference type="EMBL" id="AY218776">
    <property type="protein sequence ID" value="AAO62951.1"/>
    <property type="molecule type" value="mRNA"/>
</dbReference>
<dbReference type="GO" id="GO:0005576">
    <property type="term" value="C:extracellular region"/>
    <property type="evidence" value="ECO:0007669"/>
    <property type="project" value="UniProtKB-SubCell"/>
</dbReference>
<dbReference type="GO" id="GO:0016020">
    <property type="term" value="C:membrane"/>
    <property type="evidence" value="ECO:0007669"/>
    <property type="project" value="UniProtKB-KW"/>
</dbReference>
<dbReference type="GO" id="GO:0044218">
    <property type="term" value="C:other organism cell membrane"/>
    <property type="evidence" value="ECO:0007669"/>
    <property type="project" value="UniProtKB-KW"/>
</dbReference>
<dbReference type="GO" id="GO:0006952">
    <property type="term" value="P:defense response"/>
    <property type="evidence" value="ECO:0007669"/>
    <property type="project" value="UniProtKB-KW"/>
</dbReference>
<dbReference type="GO" id="GO:0031640">
    <property type="term" value="P:killing of cells of another organism"/>
    <property type="evidence" value="ECO:0007669"/>
    <property type="project" value="UniProtKB-KW"/>
</dbReference>
<dbReference type="InterPro" id="IPR004275">
    <property type="entry name" value="Frog_antimicrobial_propeptide"/>
</dbReference>
<dbReference type="InterPro" id="IPR016322">
    <property type="entry name" value="FSAP"/>
</dbReference>
<dbReference type="Pfam" id="PF03032">
    <property type="entry name" value="FSAP_sig_propep"/>
    <property type="match status" value="1"/>
</dbReference>
<dbReference type="PIRSF" id="PIRSF001822">
    <property type="entry name" value="Dermaseptin_precursor"/>
    <property type="match status" value="1"/>
</dbReference>
<evidence type="ECO:0000250" key="1">
    <source>
        <dbReference type="UniProtKB" id="O93454"/>
    </source>
</evidence>
<evidence type="ECO:0000255" key="2"/>
<evidence type="ECO:0000256" key="3">
    <source>
        <dbReference type="SAM" id="MobiDB-lite"/>
    </source>
</evidence>
<evidence type="ECO:0000303" key="4">
    <source>
    </source>
</evidence>
<evidence type="ECO:0000303" key="5">
    <source>
    </source>
</evidence>
<evidence type="ECO:0000305" key="6"/>
<evidence type="ECO:0000305" key="7">
    <source>
    </source>
</evidence>
<evidence type="ECO:0000305" key="8">
    <source>
    </source>
</evidence>
<feature type="signal peptide" evidence="2">
    <location>
        <begin position="1"/>
        <end position="22"/>
    </location>
</feature>
<feature type="propeptide" id="PRO_0000449901" evidence="7 8">
    <location>
        <begin position="23"/>
        <end position="45"/>
    </location>
</feature>
<feature type="peptide" id="PRO_5004295821" description="Plasticin-C2">
    <location>
        <begin position="46"/>
        <end position="68"/>
    </location>
</feature>
<feature type="propeptide" id="PRO_0000449902" evidence="6">
    <location>
        <begin position="70"/>
        <end position="71"/>
    </location>
</feature>
<feature type="region of interest" description="Disordered" evidence="3">
    <location>
        <begin position="25"/>
        <end position="46"/>
    </location>
</feature>
<feature type="compositionally biased region" description="Acidic residues" evidence="3">
    <location>
        <begin position="26"/>
        <end position="40"/>
    </location>
</feature>
<feature type="modified residue" description="Asparagine amide" evidence="6">
    <location>
        <position position="68"/>
    </location>
</feature>